<feature type="chain" id="PRO_0000245222" description="Non-histone chromosomal protein 6">
    <location>
        <begin position="1"/>
        <end position="108"/>
    </location>
</feature>
<feature type="DNA-binding region" description="HMG box" evidence="2">
    <location>
        <begin position="16"/>
        <end position="84"/>
    </location>
</feature>
<feature type="region of interest" description="Disordered" evidence="3">
    <location>
        <begin position="1"/>
        <end position="20"/>
    </location>
</feature>
<feature type="region of interest" description="Disordered" evidence="3">
    <location>
        <begin position="61"/>
        <end position="108"/>
    </location>
</feature>
<feature type="compositionally biased region" description="Basic and acidic residues" evidence="3">
    <location>
        <begin position="61"/>
        <end position="85"/>
    </location>
</feature>
<feature type="compositionally biased region" description="Low complexity" evidence="3">
    <location>
        <begin position="96"/>
        <end position="108"/>
    </location>
</feature>
<proteinExistence type="inferred from homology"/>
<reference key="1">
    <citation type="journal article" date="2002" name="Nature">
        <title>The genome sequence of Schizosaccharomyces pombe.</title>
        <authorList>
            <person name="Wood V."/>
            <person name="Gwilliam R."/>
            <person name="Rajandream M.A."/>
            <person name="Lyne M.H."/>
            <person name="Lyne R."/>
            <person name="Stewart A."/>
            <person name="Sgouros J.G."/>
            <person name="Peat N."/>
            <person name="Hayles J."/>
            <person name="Baker S.G."/>
            <person name="Basham D."/>
            <person name="Bowman S."/>
            <person name="Brooks K."/>
            <person name="Brown D."/>
            <person name="Brown S."/>
            <person name="Chillingworth T."/>
            <person name="Churcher C.M."/>
            <person name="Collins M."/>
            <person name="Connor R."/>
            <person name="Cronin A."/>
            <person name="Davis P."/>
            <person name="Feltwell T."/>
            <person name="Fraser A."/>
            <person name="Gentles S."/>
            <person name="Goble A."/>
            <person name="Hamlin N."/>
            <person name="Harris D.E."/>
            <person name="Hidalgo J."/>
            <person name="Hodgson G."/>
            <person name="Holroyd S."/>
            <person name="Hornsby T."/>
            <person name="Howarth S."/>
            <person name="Huckle E.J."/>
            <person name="Hunt S."/>
            <person name="Jagels K."/>
            <person name="James K.D."/>
            <person name="Jones L."/>
            <person name="Jones M."/>
            <person name="Leather S."/>
            <person name="McDonald S."/>
            <person name="McLean J."/>
            <person name="Mooney P."/>
            <person name="Moule S."/>
            <person name="Mungall K.L."/>
            <person name="Murphy L.D."/>
            <person name="Niblett D."/>
            <person name="Odell C."/>
            <person name="Oliver K."/>
            <person name="O'Neil S."/>
            <person name="Pearson D."/>
            <person name="Quail M.A."/>
            <person name="Rabbinowitsch E."/>
            <person name="Rutherford K.M."/>
            <person name="Rutter S."/>
            <person name="Saunders D."/>
            <person name="Seeger K."/>
            <person name="Sharp S."/>
            <person name="Skelton J."/>
            <person name="Simmonds M.N."/>
            <person name="Squares R."/>
            <person name="Squares S."/>
            <person name="Stevens K."/>
            <person name="Taylor K."/>
            <person name="Taylor R.G."/>
            <person name="Tivey A."/>
            <person name="Walsh S.V."/>
            <person name="Warren T."/>
            <person name="Whitehead S."/>
            <person name="Woodward J.R."/>
            <person name="Volckaert G."/>
            <person name="Aert R."/>
            <person name="Robben J."/>
            <person name="Grymonprez B."/>
            <person name="Weltjens I."/>
            <person name="Vanstreels E."/>
            <person name="Rieger M."/>
            <person name="Schaefer M."/>
            <person name="Mueller-Auer S."/>
            <person name="Gabel C."/>
            <person name="Fuchs M."/>
            <person name="Duesterhoeft A."/>
            <person name="Fritzc C."/>
            <person name="Holzer E."/>
            <person name="Moestl D."/>
            <person name="Hilbert H."/>
            <person name="Borzym K."/>
            <person name="Langer I."/>
            <person name="Beck A."/>
            <person name="Lehrach H."/>
            <person name="Reinhardt R."/>
            <person name="Pohl T.M."/>
            <person name="Eger P."/>
            <person name="Zimmermann W."/>
            <person name="Wedler H."/>
            <person name="Wambutt R."/>
            <person name="Purnelle B."/>
            <person name="Goffeau A."/>
            <person name="Cadieu E."/>
            <person name="Dreano S."/>
            <person name="Gloux S."/>
            <person name="Lelaure V."/>
            <person name="Mottier S."/>
            <person name="Galibert F."/>
            <person name="Aves S.J."/>
            <person name="Xiang Z."/>
            <person name="Hunt C."/>
            <person name="Moore K."/>
            <person name="Hurst S.M."/>
            <person name="Lucas M."/>
            <person name="Rochet M."/>
            <person name="Gaillardin C."/>
            <person name="Tallada V.A."/>
            <person name="Garzon A."/>
            <person name="Thode G."/>
            <person name="Daga R.R."/>
            <person name="Cruzado L."/>
            <person name="Jimenez J."/>
            <person name="Sanchez M."/>
            <person name="del Rey F."/>
            <person name="Benito J."/>
            <person name="Dominguez A."/>
            <person name="Revuelta J.L."/>
            <person name="Moreno S."/>
            <person name="Armstrong J."/>
            <person name="Forsburg S.L."/>
            <person name="Cerutti L."/>
            <person name="Lowe T."/>
            <person name="McCombie W.R."/>
            <person name="Paulsen I."/>
            <person name="Potashkin J."/>
            <person name="Shpakovski G.V."/>
            <person name="Ussery D."/>
            <person name="Barrell B.G."/>
            <person name="Nurse P."/>
        </authorList>
    </citation>
    <scope>NUCLEOTIDE SEQUENCE [LARGE SCALE GENOMIC DNA]</scope>
    <source>
        <strain>972 / ATCC 24843</strain>
    </source>
</reference>
<reference key="2">
    <citation type="journal article" date="2016" name="EMBO Rep.">
        <title>Abo1, a conserved bromodomain AAA-ATPase, maintains global nucleosome occupancy and organisation.</title>
        <authorList>
            <person name="Gal C."/>
            <person name="Murton H.E."/>
            <person name="Subramanian L."/>
            <person name="Whale A.J."/>
            <person name="Moore K.M."/>
            <person name="Paszkiewicz K."/>
            <person name="Codlin S."/>
            <person name="Baehler J."/>
            <person name="Creamer K.M."/>
            <person name="Partridge J.F."/>
            <person name="Allshire R.C."/>
            <person name="Kent N.A."/>
            <person name="Whitehall S.K."/>
        </authorList>
    </citation>
    <scope>DISRUPTION PHENOTYPE</scope>
</reference>
<accession>P87057</accession>
<sequence length="108" mass="12361">MPRAAKSSRKKDPNTPKRNMSAFMFFSIENREKMKTDNPDATFGQLGSLLGKRWKELTSTEREPYEEKARQDKERYERERKEYDTKLANGEKTGKASAPAAAAAAKEE</sequence>
<comment type="function">
    <text evidence="1">DNA-binding protein that induces severe bending of DNA. Required for DNA-binding by the FACT complex, a general chromatin factor that acts to reorganize nucleosomes. The FACT complex is involved in multiple processes that require DNA as a template such as mRNA elongation, DNA replication and DNA repair. Also augments the fidelity of transcription by RNA polymerase III independently of any role in the FACT complex (By similarity).</text>
</comment>
<comment type="subunit">
    <text evidence="1">Weakly associates with the stable spt16-pob3 heterodimer to form the FACT complex.</text>
</comment>
<comment type="subcellular location">
    <subcellularLocation>
        <location evidence="2">Nucleus</location>
    </subcellularLocation>
    <subcellularLocation>
        <location evidence="1">Chromosome</location>
    </subcellularLocation>
</comment>
<comment type="disruption phenotype">
    <text evidence="4">Double-knockout with abo1 exacerbates the sensitivity of the abo1-knockout to methyl methanesulfonate (DNA damaging agent).</text>
</comment>
<comment type="similarity">
    <text evidence="5">Belongs to the NHP6 family.</text>
</comment>
<organism>
    <name type="scientific">Schizosaccharomyces pombe (strain 972 / ATCC 24843)</name>
    <name type="common">Fission yeast</name>
    <dbReference type="NCBI Taxonomy" id="284812"/>
    <lineage>
        <taxon>Eukaryota</taxon>
        <taxon>Fungi</taxon>
        <taxon>Dikarya</taxon>
        <taxon>Ascomycota</taxon>
        <taxon>Taphrinomycotina</taxon>
        <taxon>Schizosaccharomycetes</taxon>
        <taxon>Schizosaccharomycetales</taxon>
        <taxon>Schizosaccharomycetaceae</taxon>
        <taxon>Schizosaccharomyces</taxon>
    </lineage>
</organism>
<gene>
    <name type="primary">nhp6</name>
    <name type="ORF">SPAC57A10.09c</name>
</gene>
<name>NHP6_SCHPO</name>
<evidence type="ECO:0000250" key="1">
    <source>
        <dbReference type="UniProtKB" id="P11632"/>
    </source>
</evidence>
<evidence type="ECO:0000255" key="2">
    <source>
        <dbReference type="PROSITE-ProRule" id="PRU00267"/>
    </source>
</evidence>
<evidence type="ECO:0000256" key="3">
    <source>
        <dbReference type="SAM" id="MobiDB-lite"/>
    </source>
</evidence>
<evidence type="ECO:0000269" key="4">
    <source>
    </source>
</evidence>
<evidence type="ECO:0000305" key="5"/>
<protein>
    <recommendedName>
        <fullName>Non-histone chromosomal protein 6</fullName>
    </recommendedName>
</protein>
<keyword id="KW-0158">Chromosome</keyword>
<keyword id="KW-0227">DNA damage</keyword>
<keyword id="KW-0234">DNA repair</keyword>
<keyword id="KW-0238">DNA-binding</keyword>
<keyword id="KW-0539">Nucleus</keyword>
<keyword id="KW-1185">Reference proteome</keyword>
<keyword id="KW-0804">Transcription</keyword>
<keyword id="KW-0805">Transcription regulation</keyword>
<dbReference type="EMBL" id="CU329670">
    <property type="protein sequence ID" value="CAB08172.1"/>
    <property type="molecule type" value="Genomic_DNA"/>
</dbReference>
<dbReference type="PIR" id="T38936">
    <property type="entry name" value="T38936"/>
</dbReference>
<dbReference type="RefSeq" id="NP_593314.1">
    <property type="nucleotide sequence ID" value="NM_001018745.2"/>
</dbReference>
<dbReference type="SMR" id="P87057"/>
<dbReference type="BioGRID" id="279323">
    <property type="interactions" value="27"/>
</dbReference>
<dbReference type="FunCoup" id="P87057">
    <property type="interactions" value="307"/>
</dbReference>
<dbReference type="STRING" id="284812.P87057"/>
<dbReference type="iPTMnet" id="P87057"/>
<dbReference type="PaxDb" id="4896-SPAC57A10.09c.1"/>
<dbReference type="EnsemblFungi" id="SPAC57A10.09c.1">
    <property type="protein sequence ID" value="SPAC57A10.09c.1:pep"/>
    <property type="gene ID" value="SPAC57A10.09c"/>
</dbReference>
<dbReference type="GeneID" id="2542878"/>
<dbReference type="KEGG" id="spo:2542878"/>
<dbReference type="PomBase" id="SPAC57A10.09c">
    <property type="gene designation" value="nhp6"/>
</dbReference>
<dbReference type="VEuPathDB" id="FungiDB:SPAC57A10.09c"/>
<dbReference type="eggNOG" id="KOG0381">
    <property type="taxonomic scope" value="Eukaryota"/>
</dbReference>
<dbReference type="HOGENOM" id="CLU_082854_10_0_1"/>
<dbReference type="InParanoid" id="P87057"/>
<dbReference type="OMA" id="MKNMGGK"/>
<dbReference type="PhylomeDB" id="P87057"/>
<dbReference type="Reactome" id="R-SPO-140342">
    <property type="pathway name" value="Apoptosis induced DNA fragmentation"/>
</dbReference>
<dbReference type="Reactome" id="R-SPO-163282">
    <property type="pathway name" value="Mitochondrial transcription initiation"/>
</dbReference>
<dbReference type="Reactome" id="R-SPO-5620971">
    <property type="pathway name" value="Pyroptosis"/>
</dbReference>
<dbReference type="Reactome" id="R-SPO-5686938">
    <property type="pathway name" value="Regulation of TLR by endogenous ligand"/>
</dbReference>
<dbReference type="Reactome" id="R-SPO-6798695">
    <property type="pathway name" value="Neutrophil degranulation"/>
</dbReference>
<dbReference type="Reactome" id="R-SPO-9837999">
    <property type="pathway name" value="Mitochondrial protein degradation"/>
</dbReference>
<dbReference type="PRO" id="PR:P87057"/>
<dbReference type="Proteomes" id="UP000002485">
    <property type="component" value="Chromosome I"/>
</dbReference>
<dbReference type="GO" id="GO:0000785">
    <property type="term" value="C:chromatin"/>
    <property type="evidence" value="ECO:0000266"/>
    <property type="project" value="PomBase"/>
</dbReference>
<dbReference type="GO" id="GO:0005829">
    <property type="term" value="C:cytosol"/>
    <property type="evidence" value="ECO:0007005"/>
    <property type="project" value="PomBase"/>
</dbReference>
<dbReference type="GO" id="GO:0005634">
    <property type="term" value="C:nucleus"/>
    <property type="evidence" value="ECO:0007005"/>
    <property type="project" value="PomBase"/>
</dbReference>
<dbReference type="GO" id="GO:0003677">
    <property type="term" value="F:DNA binding"/>
    <property type="evidence" value="ECO:0000255"/>
    <property type="project" value="PomBase"/>
</dbReference>
<dbReference type="GO" id="GO:0006338">
    <property type="term" value="P:chromatin remodeling"/>
    <property type="evidence" value="ECO:0000266"/>
    <property type="project" value="PomBase"/>
</dbReference>
<dbReference type="GO" id="GO:0006281">
    <property type="term" value="P:DNA repair"/>
    <property type="evidence" value="ECO:0007669"/>
    <property type="project" value="UniProtKB-KW"/>
</dbReference>
<dbReference type="CDD" id="cd01390">
    <property type="entry name" value="HMG-box_NHP6-like"/>
    <property type="match status" value="1"/>
</dbReference>
<dbReference type="FunFam" id="1.10.30.10:FF:000037">
    <property type="entry name" value="High mobility group protein B2"/>
    <property type="match status" value="1"/>
</dbReference>
<dbReference type="Gene3D" id="1.10.30.10">
    <property type="entry name" value="High mobility group box domain"/>
    <property type="match status" value="1"/>
</dbReference>
<dbReference type="InterPro" id="IPR009071">
    <property type="entry name" value="HMG_box_dom"/>
</dbReference>
<dbReference type="InterPro" id="IPR036910">
    <property type="entry name" value="HMG_box_dom_sf"/>
</dbReference>
<dbReference type="InterPro" id="IPR050342">
    <property type="entry name" value="HMGB"/>
</dbReference>
<dbReference type="PANTHER" id="PTHR48112">
    <property type="entry name" value="HIGH MOBILITY GROUP PROTEIN DSP1"/>
    <property type="match status" value="1"/>
</dbReference>
<dbReference type="PANTHER" id="PTHR48112:SF22">
    <property type="entry name" value="MITOCHONDRIAL TRANSCRIPTION FACTOR A, ISOFORM B"/>
    <property type="match status" value="1"/>
</dbReference>
<dbReference type="Pfam" id="PF00505">
    <property type="entry name" value="HMG_box"/>
    <property type="match status" value="1"/>
</dbReference>
<dbReference type="PRINTS" id="PR00886">
    <property type="entry name" value="HIGHMOBLTY12"/>
</dbReference>
<dbReference type="SMART" id="SM00398">
    <property type="entry name" value="HMG"/>
    <property type="match status" value="1"/>
</dbReference>
<dbReference type="SUPFAM" id="SSF47095">
    <property type="entry name" value="HMG-box"/>
    <property type="match status" value="1"/>
</dbReference>
<dbReference type="PROSITE" id="PS50118">
    <property type="entry name" value="HMG_BOX_2"/>
    <property type="match status" value="1"/>
</dbReference>